<feature type="chain" id="PRO_1000086254" description="Small ribosomal subunit protein uS13">
    <location>
        <begin position="1"/>
        <end position="125"/>
    </location>
</feature>
<gene>
    <name evidence="1" type="primary">rpsM</name>
    <name type="ordered locus">RrIowa_1175</name>
</gene>
<protein>
    <recommendedName>
        <fullName evidence="1">Small ribosomal subunit protein uS13</fullName>
    </recommendedName>
    <alternativeName>
        <fullName evidence="2">30S ribosomal protein S13</fullName>
    </alternativeName>
</protein>
<accession>B0BUN8</accession>
<organism>
    <name type="scientific">Rickettsia rickettsii (strain Iowa)</name>
    <dbReference type="NCBI Taxonomy" id="452659"/>
    <lineage>
        <taxon>Bacteria</taxon>
        <taxon>Pseudomonadati</taxon>
        <taxon>Pseudomonadota</taxon>
        <taxon>Alphaproteobacteria</taxon>
        <taxon>Rickettsiales</taxon>
        <taxon>Rickettsiaceae</taxon>
        <taxon>Rickettsieae</taxon>
        <taxon>Rickettsia</taxon>
        <taxon>spotted fever group</taxon>
    </lineage>
</organism>
<sequence>MARIASVNIPDNKRVVVSLTYIYGLGPTMAAEICNKAKISKDKKVKELTDQELIGLRNIIESEYKVEGDLRREVTLNIKKKKDIRCYQGLRHIRKLPVRGQNTHSNARTRKGKAIAIAGKKKAVK</sequence>
<evidence type="ECO:0000255" key="1">
    <source>
        <dbReference type="HAMAP-Rule" id="MF_01315"/>
    </source>
</evidence>
<evidence type="ECO:0000305" key="2"/>
<comment type="function">
    <text evidence="1">Located at the top of the head of the 30S subunit, it contacts several helices of the 16S rRNA. In the 70S ribosome it contacts the 23S rRNA (bridge B1a) and protein L5 of the 50S subunit (bridge B1b), connecting the 2 subunits; these bridges are implicated in subunit movement. Contacts the tRNAs in the A and P-sites.</text>
</comment>
<comment type="subunit">
    <text evidence="1">Part of the 30S ribosomal subunit. Forms a loose heterodimer with protein S19. Forms two bridges to the 50S subunit in the 70S ribosome.</text>
</comment>
<comment type="similarity">
    <text evidence="1">Belongs to the universal ribosomal protein uS13 family.</text>
</comment>
<keyword id="KW-0687">Ribonucleoprotein</keyword>
<keyword id="KW-0689">Ribosomal protein</keyword>
<keyword id="KW-0694">RNA-binding</keyword>
<keyword id="KW-0699">rRNA-binding</keyword>
<keyword id="KW-0820">tRNA-binding</keyword>
<reference key="1">
    <citation type="journal article" date="2008" name="Infect. Immun.">
        <title>Genomic comparison of virulent Rickettsia rickettsii Sheila Smith and avirulent Rickettsia rickettsii Iowa.</title>
        <authorList>
            <person name="Ellison D.W."/>
            <person name="Clark T.R."/>
            <person name="Sturdevant D.E."/>
            <person name="Virtaneva K."/>
            <person name="Porcella S.F."/>
            <person name="Hackstadt T."/>
        </authorList>
    </citation>
    <scope>NUCLEOTIDE SEQUENCE [LARGE SCALE GENOMIC DNA]</scope>
    <source>
        <strain>Iowa</strain>
    </source>
</reference>
<proteinExistence type="inferred from homology"/>
<name>RS13_RICRO</name>
<dbReference type="EMBL" id="CP000766">
    <property type="protein sequence ID" value="ABY72948.1"/>
    <property type="molecule type" value="Genomic_DNA"/>
</dbReference>
<dbReference type="RefSeq" id="WP_012151135.1">
    <property type="nucleotide sequence ID" value="NC_010263.3"/>
</dbReference>
<dbReference type="SMR" id="B0BUN8"/>
<dbReference type="GeneID" id="79937648"/>
<dbReference type="KEGG" id="rrj:RrIowa_1175"/>
<dbReference type="eggNOG" id="COG0099">
    <property type="taxonomic scope" value="Bacteria"/>
</dbReference>
<dbReference type="HOGENOM" id="CLU_103849_1_2_5"/>
<dbReference type="Proteomes" id="UP000000796">
    <property type="component" value="Chromosome"/>
</dbReference>
<dbReference type="GO" id="GO:0005829">
    <property type="term" value="C:cytosol"/>
    <property type="evidence" value="ECO:0007669"/>
    <property type="project" value="TreeGrafter"/>
</dbReference>
<dbReference type="GO" id="GO:0015935">
    <property type="term" value="C:small ribosomal subunit"/>
    <property type="evidence" value="ECO:0007669"/>
    <property type="project" value="TreeGrafter"/>
</dbReference>
<dbReference type="GO" id="GO:0019843">
    <property type="term" value="F:rRNA binding"/>
    <property type="evidence" value="ECO:0007669"/>
    <property type="project" value="UniProtKB-UniRule"/>
</dbReference>
<dbReference type="GO" id="GO:0003735">
    <property type="term" value="F:structural constituent of ribosome"/>
    <property type="evidence" value="ECO:0007669"/>
    <property type="project" value="InterPro"/>
</dbReference>
<dbReference type="GO" id="GO:0000049">
    <property type="term" value="F:tRNA binding"/>
    <property type="evidence" value="ECO:0007669"/>
    <property type="project" value="UniProtKB-UniRule"/>
</dbReference>
<dbReference type="GO" id="GO:0006412">
    <property type="term" value="P:translation"/>
    <property type="evidence" value="ECO:0007669"/>
    <property type="project" value="UniProtKB-UniRule"/>
</dbReference>
<dbReference type="FunFam" id="1.10.8.50:FF:000001">
    <property type="entry name" value="30S ribosomal protein S13"/>
    <property type="match status" value="1"/>
</dbReference>
<dbReference type="Gene3D" id="1.10.8.50">
    <property type="match status" value="1"/>
</dbReference>
<dbReference type="Gene3D" id="4.10.910.10">
    <property type="entry name" value="30s ribosomal protein s13, domain 2"/>
    <property type="match status" value="1"/>
</dbReference>
<dbReference type="HAMAP" id="MF_01315">
    <property type="entry name" value="Ribosomal_uS13"/>
    <property type="match status" value="1"/>
</dbReference>
<dbReference type="InterPro" id="IPR027437">
    <property type="entry name" value="Rbsml_uS13_C"/>
</dbReference>
<dbReference type="InterPro" id="IPR001892">
    <property type="entry name" value="Ribosomal_uS13"/>
</dbReference>
<dbReference type="InterPro" id="IPR010979">
    <property type="entry name" value="Ribosomal_uS13-like_H2TH"/>
</dbReference>
<dbReference type="InterPro" id="IPR019980">
    <property type="entry name" value="Ribosomal_uS13_bac-type"/>
</dbReference>
<dbReference type="InterPro" id="IPR018269">
    <property type="entry name" value="Ribosomal_uS13_CS"/>
</dbReference>
<dbReference type="NCBIfam" id="TIGR03631">
    <property type="entry name" value="uS13_bact"/>
    <property type="match status" value="1"/>
</dbReference>
<dbReference type="PANTHER" id="PTHR10871">
    <property type="entry name" value="30S RIBOSOMAL PROTEIN S13/40S RIBOSOMAL PROTEIN S18"/>
    <property type="match status" value="1"/>
</dbReference>
<dbReference type="PANTHER" id="PTHR10871:SF1">
    <property type="entry name" value="SMALL RIBOSOMAL SUBUNIT PROTEIN US13M"/>
    <property type="match status" value="1"/>
</dbReference>
<dbReference type="Pfam" id="PF00416">
    <property type="entry name" value="Ribosomal_S13"/>
    <property type="match status" value="1"/>
</dbReference>
<dbReference type="PIRSF" id="PIRSF002134">
    <property type="entry name" value="Ribosomal_S13"/>
    <property type="match status" value="1"/>
</dbReference>
<dbReference type="SUPFAM" id="SSF46946">
    <property type="entry name" value="S13-like H2TH domain"/>
    <property type="match status" value="1"/>
</dbReference>
<dbReference type="PROSITE" id="PS00646">
    <property type="entry name" value="RIBOSOMAL_S13_1"/>
    <property type="match status" value="1"/>
</dbReference>
<dbReference type="PROSITE" id="PS50159">
    <property type="entry name" value="RIBOSOMAL_S13_2"/>
    <property type="match status" value="1"/>
</dbReference>